<reference key="1">
    <citation type="journal article" date="2005" name="Science">
        <title>The transcriptional landscape of the mammalian genome.</title>
        <authorList>
            <person name="Carninci P."/>
            <person name="Kasukawa T."/>
            <person name="Katayama S."/>
            <person name="Gough J."/>
            <person name="Frith M.C."/>
            <person name="Maeda N."/>
            <person name="Oyama R."/>
            <person name="Ravasi T."/>
            <person name="Lenhard B."/>
            <person name="Wells C."/>
            <person name="Kodzius R."/>
            <person name="Shimokawa K."/>
            <person name="Bajic V.B."/>
            <person name="Brenner S.E."/>
            <person name="Batalov S."/>
            <person name="Forrest A.R."/>
            <person name="Zavolan M."/>
            <person name="Davis M.J."/>
            <person name="Wilming L.G."/>
            <person name="Aidinis V."/>
            <person name="Allen J.E."/>
            <person name="Ambesi-Impiombato A."/>
            <person name="Apweiler R."/>
            <person name="Aturaliya R.N."/>
            <person name="Bailey T.L."/>
            <person name="Bansal M."/>
            <person name="Baxter L."/>
            <person name="Beisel K.W."/>
            <person name="Bersano T."/>
            <person name="Bono H."/>
            <person name="Chalk A.M."/>
            <person name="Chiu K.P."/>
            <person name="Choudhary V."/>
            <person name="Christoffels A."/>
            <person name="Clutterbuck D.R."/>
            <person name="Crowe M.L."/>
            <person name="Dalla E."/>
            <person name="Dalrymple B.P."/>
            <person name="de Bono B."/>
            <person name="Della Gatta G."/>
            <person name="di Bernardo D."/>
            <person name="Down T."/>
            <person name="Engstrom P."/>
            <person name="Fagiolini M."/>
            <person name="Faulkner G."/>
            <person name="Fletcher C.F."/>
            <person name="Fukushima T."/>
            <person name="Furuno M."/>
            <person name="Futaki S."/>
            <person name="Gariboldi M."/>
            <person name="Georgii-Hemming P."/>
            <person name="Gingeras T.R."/>
            <person name="Gojobori T."/>
            <person name="Green R.E."/>
            <person name="Gustincich S."/>
            <person name="Harbers M."/>
            <person name="Hayashi Y."/>
            <person name="Hensch T.K."/>
            <person name="Hirokawa N."/>
            <person name="Hill D."/>
            <person name="Huminiecki L."/>
            <person name="Iacono M."/>
            <person name="Ikeo K."/>
            <person name="Iwama A."/>
            <person name="Ishikawa T."/>
            <person name="Jakt M."/>
            <person name="Kanapin A."/>
            <person name="Katoh M."/>
            <person name="Kawasawa Y."/>
            <person name="Kelso J."/>
            <person name="Kitamura H."/>
            <person name="Kitano H."/>
            <person name="Kollias G."/>
            <person name="Krishnan S.P."/>
            <person name="Kruger A."/>
            <person name="Kummerfeld S.K."/>
            <person name="Kurochkin I.V."/>
            <person name="Lareau L.F."/>
            <person name="Lazarevic D."/>
            <person name="Lipovich L."/>
            <person name="Liu J."/>
            <person name="Liuni S."/>
            <person name="McWilliam S."/>
            <person name="Madan Babu M."/>
            <person name="Madera M."/>
            <person name="Marchionni L."/>
            <person name="Matsuda H."/>
            <person name="Matsuzawa S."/>
            <person name="Miki H."/>
            <person name="Mignone F."/>
            <person name="Miyake S."/>
            <person name="Morris K."/>
            <person name="Mottagui-Tabar S."/>
            <person name="Mulder N."/>
            <person name="Nakano N."/>
            <person name="Nakauchi H."/>
            <person name="Ng P."/>
            <person name="Nilsson R."/>
            <person name="Nishiguchi S."/>
            <person name="Nishikawa S."/>
            <person name="Nori F."/>
            <person name="Ohara O."/>
            <person name="Okazaki Y."/>
            <person name="Orlando V."/>
            <person name="Pang K.C."/>
            <person name="Pavan W.J."/>
            <person name="Pavesi G."/>
            <person name="Pesole G."/>
            <person name="Petrovsky N."/>
            <person name="Piazza S."/>
            <person name="Reed J."/>
            <person name="Reid J.F."/>
            <person name="Ring B.Z."/>
            <person name="Ringwald M."/>
            <person name="Rost B."/>
            <person name="Ruan Y."/>
            <person name="Salzberg S.L."/>
            <person name="Sandelin A."/>
            <person name="Schneider C."/>
            <person name="Schoenbach C."/>
            <person name="Sekiguchi K."/>
            <person name="Semple C.A."/>
            <person name="Seno S."/>
            <person name="Sessa L."/>
            <person name="Sheng Y."/>
            <person name="Shibata Y."/>
            <person name="Shimada H."/>
            <person name="Shimada K."/>
            <person name="Silva D."/>
            <person name="Sinclair B."/>
            <person name="Sperling S."/>
            <person name="Stupka E."/>
            <person name="Sugiura K."/>
            <person name="Sultana R."/>
            <person name="Takenaka Y."/>
            <person name="Taki K."/>
            <person name="Tammoja K."/>
            <person name="Tan S.L."/>
            <person name="Tang S."/>
            <person name="Taylor M.S."/>
            <person name="Tegner J."/>
            <person name="Teichmann S.A."/>
            <person name="Ueda H.R."/>
            <person name="van Nimwegen E."/>
            <person name="Verardo R."/>
            <person name="Wei C.L."/>
            <person name="Yagi K."/>
            <person name="Yamanishi H."/>
            <person name="Zabarovsky E."/>
            <person name="Zhu S."/>
            <person name="Zimmer A."/>
            <person name="Hide W."/>
            <person name="Bult C."/>
            <person name="Grimmond S.M."/>
            <person name="Teasdale R.D."/>
            <person name="Liu E.T."/>
            <person name="Brusic V."/>
            <person name="Quackenbush J."/>
            <person name="Wahlestedt C."/>
            <person name="Mattick J.S."/>
            <person name="Hume D.A."/>
            <person name="Kai C."/>
            <person name="Sasaki D."/>
            <person name="Tomaru Y."/>
            <person name="Fukuda S."/>
            <person name="Kanamori-Katayama M."/>
            <person name="Suzuki M."/>
            <person name="Aoki J."/>
            <person name="Arakawa T."/>
            <person name="Iida J."/>
            <person name="Imamura K."/>
            <person name="Itoh M."/>
            <person name="Kato T."/>
            <person name="Kawaji H."/>
            <person name="Kawagashira N."/>
            <person name="Kawashima T."/>
            <person name="Kojima M."/>
            <person name="Kondo S."/>
            <person name="Konno H."/>
            <person name="Nakano K."/>
            <person name="Ninomiya N."/>
            <person name="Nishio T."/>
            <person name="Okada M."/>
            <person name="Plessy C."/>
            <person name="Shibata K."/>
            <person name="Shiraki T."/>
            <person name="Suzuki S."/>
            <person name="Tagami M."/>
            <person name="Waki K."/>
            <person name="Watahiki A."/>
            <person name="Okamura-Oho Y."/>
            <person name="Suzuki H."/>
            <person name="Kawai J."/>
            <person name="Hayashizaki Y."/>
        </authorList>
    </citation>
    <scope>NUCLEOTIDE SEQUENCE [LARGE SCALE MRNA]</scope>
    <source>
        <strain>C57BL/6J</strain>
        <tissue>Testis</tissue>
    </source>
</reference>
<reference key="2">
    <citation type="journal article" date="2009" name="PLoS Biol.">
        <title>Lineage-specific biology revealed by a finished genome assembly of the mouse.</title>
        <authorList>
            <person name="Church D.M."/>
            <person name="Goodstadt L."/>
            <person name="Hillier L.W."/>
            <person name="Zody M.C."/>
            <person name="Goldstein S."/>
            <person name="She X."/>
            <person name="Bult C.J."/>
            <person name="Agarwala R."/>
            <person name="Cherry J.L."/>
            <person name="DiCuccio M."/>
            <person name="Hlavina W."/>
            <person name="Kapustin Y."/>
            <person name="Meric P."/>
            <person name="Maglott D."/>
            <person name="Birtle Z."/>
            <person name="Marques A.C."/>
            <person name="Graves T."/>
            <person name="Zhou S."/>
            <person name="Teague B."/>
            <person name="Potamousis K."/>
            <person name="Churas C."/>
            <person name="Place M."/>
            <person name="Herschleb J."/>
            <person name="Runnheim R."/>
            <person name="Forrest D."/>
            <person name="Amos-Landgraf J."/>
            <person name="Schwartz D.C."/>
            <person name="Cheng Z."/>
            <person name="Lindblad-Toh K."/>
            <person name="Eichler E.E."/>
            <person name="Ponting C.P."/>
        </authorList>
    </citation>
    <scope>NUCLEOTIDE SEQUENCE [LARGE SCALE GENOMIC DNA]</scope>
    <source>
        <strain>C57BL/6J</strain>
    </source>
</reference>
<reference key="3">
    <citation type="journal article" date="2010" name="Cell">
        <title>A tissue-specific atlas of mouse protein phosphorylation and expression.</title>
        <authorList>
            <person name="Huttlin E.L."/>
            <person name="Jedrychowski M.P."/>
            <person name="Elias J.E."/>
            <person name="Goswami T."/>
            <person name="Rad R."/>
            <person name="Beausoleil S.A."/>
            <person name="Villen J."/>
            <person name="Haas W."/>
            <person name="Sowa M.E."/>
            <person name="Gygi S.P."/>
        </authorList>
    </citation>
    <scope>PHOSPHORYLATION [LARGE SCALE ANALYSIS] AT SER-87</scope>
    <scope>IDENTIFICATION BY MASS SPECTROMETRY [LARGE SCALE ANALYSIS]</scope>
    <source>
        <tissue>Testis</tissue>
    </source>
</reference>
<reference key="4">
    <citation type="journal article" date="2013" name="PLoS ONE">
        <title>A novel testis-enriched gene Spata33 is expressed during spermatogenesis.</title>
        <authorList>
            <person name="Chen H."/>
            <person name="Yi M."/>
            <person name="Sheng Y."/>
            <person name="Cheng H."/>
            <person name="Zhou R."/>
        </authorList>
    </citation>
    <scope>SUBCELLULAR LOCATION</scope>
    <scope>TISSUE SPECIFICITY</scope>
    <scope>DEVELOPMENTAL STAGE</scope>
</reference>
<reference key="5">
    <citation type="journal article" date="2021" name="Cell Death Differ.">
        <title>SPATA33 is an autophagy mediator for cargo selectivity in germline mitophagy.</title>
        <authorList>
            <person name="Zhang Y."/>
            <person name="Xu X."/>
            <person name="Hu M."/>
            <person name="Wang X."/>
            <person name="Cheng H."/>
            <person name="Zhou R."/>
        </authorList>
    </citation>
    <scope>FUNCTION</scope>
    <scope>SUBCELLULAR LOCATION</scope>
    <scope>DISRUPTION PHENOTYPE</scope>
    <scope>TISSUE SPECIFICITY</scope>
    <scope>INTERACTION WITH ATG16L1 AND VDAC2</scope>
</reference>
<reference key="6">
    <citation type="journal article" date="2021" name="Proc. Natl. Acad. Sci. U.S.A.">
        <title>SPATA33 localizes calcineurin to the mitochondria and regulates sperm motility in mice.</title>
        <authorList>
            <person name="Miyata H."/>
            <person name="Oura S."/>
            <person name="Morohoshi A."/>
            <person name="Shimada K."/>
            <person name="Mashiko D."/>
            <person name="Oyama Y."/>
            <person name="Kaneda Y."/>
            <person name="Matsumura T."/>
            <person name="Abbasi F."/>
            <person name="Ikawa M."/>
        </authorList>
    </citation>
    <scope>FUNCTION</scope>
    <scope>SUBCELLULAR LOCATION</scope>
    <scope>DISRUPTION PHENOTYPE</scope>
    <scope>TISSUE SPECIFICITY</scope>
    <scope>INTERACTION WITH PPP3R2; PPP3CC AND VDAC2</scope>
</reference>
<evidence type="ECO:0000250" key="1">
    <source>
        <dbReference type="UniProtKB" id="Q96N06"/>
    </source>
</evidence>
<evidence type="ECO:0000256" key="2">
    <source>
        <dbReference type="SAM" id="MobiDB-lite"/>
    </source>
</evidence>
<evidence type="ECO:0000269" key="3">
    <source>
    </source>
</evidence>
<evidence type="ECO:0000269" key="4">
    <source>
    </source>
</evidence>
<evidence type="ECO:0000269" key="5">
    <source>
    </source>
</evidence>
<evidence type="ECO:0000305" key="6">
    <source>
    </source>
</evidence>
<evidence type="ECO:0007744" key="7">
    <source>
    </source>
</evidence>
<proteinExistence type="evidence at protein level"/>
<gene>
    <name type="primary">Spata33</name>
</gene>
<feature type="chain" id="PRO_0000282410" description="Spermatogenesis-associated protein 33">
    <location>
        <begin position="1"/>
        <end position="132"/>
    </location>
</feature>
<feature type="region of interest" description="Disordered" evidence="2">
    <location>
        <begin position="1"/>
        <end position="81"/>
    </location>
</feature>
<feature type="region of interest" description="Interaction with ATG16L1" evidence="4">
    <location>
        <begin position="1"/>
        <end position="60"/>
    </location>
</feature>
<feature type="region of interest" description="Interaction with VDAC2" evidence="4">
    <location>
        <begin position="61"/>
        <end position="132"/>
    </location>
</feature>
<feature type="region of interest" description="Disordered" evidence="2">
    <location>
        <begin position="110"/>
        <end position="132"/>
    </location>
</feature>
<feature type="short sequence motif" description="PQIIIT" evidence="6">
    <location>
        <begin position="79"/>
        <end position="84"/>
    </location>
</feature>
<feature type="compositionally biased region" description="Basic and acidic residues" evidence="2">
    <location>
        <begin position="24"/>
        <end position="42"/>
    </location>
</feature>
<feature type="modified residue" description="Phosphoserine" evidence="7">
    <location>
        <position position="87"/>
    </location>
</feature>
<accession>Q8C624</accession>
<comment type="function">
    <text evidence="4 5">Plays an important role in sperm motility and male fertility (PubMed:34446558). Required for sperm midpiece flexibility and for the localization of sperm calcineurin to the mitochondria (PubMed:34446558). Promotes mitophagy as well as acts as an autophagy mediator in male germline cells (PubMed:33087875). Links damaged mitochondria to autophagosomes via its binding to the outer mitochondrial membrane protein VDAC2, as well as to key autophagy machinery component ATG16L1 (PubMed:33087875).</text>
</comment>
<comment type="subunit">
    <text evidence="1 4 5">Interacts (via PQIIIT motif) with PPP3R2 and PPP3CC (PubMed:34446558). Interacts with VDAC2 (PubMed:33087875, PubMed:34446558). Interacts with ATG16L1 (via WD repeats) (PubMed:33087875). Interacts with PPP3R1, PPP3CA and PPP3CB (By similarity).</text>
</comment>
<comment type="subcellular location">
    <subcellularLocation>
        <location evidence="3">Cytoplasm</location>
        <location evidence="3">Cytosol</location>
    </subcellularLocation>
    <subcellularLocation>
        <location evidence="3">Nucleus</location>
    </subcellularLocation>
    <subcellularLocation>
        <location evidence="4">Cytoplasm</location>
    </subcellularLocation>
    <subcellularLocation>
        <location evidence="4 5">Mitochondrion</location>
    </subcellularLocation>
</comment>
<comment type="tissue specificity">
    <text evidence="3 4 5">Predominantly expressed in the testis (at protein level) (PubMed:23844118, PubMed:33087875, PubMed:34446558). Expressed in the sperm midpiece (at protein level) (PubMed:33087875, PubMed:34446558).</text>
</comment>
<comment type="developmental stage">
    <text evidence="3">Mainly expressed in the postpartum and adult testis. Predominantly expressed in the spermatocytes, as well as spermatogonia and round spermatids (at protein level). Expression increases during the first wave of the spermatogenesis.</text>
</comment>
<comment type="disruption phenotype">
    <text evidence="4 5">Mice exhibit reduced sperm motility because of an inflexible midpiece, leading to impaired male fertility (PubMed:34446558). Spata33 knockout in Sertoli cells and spermatogenic cells suppresses mitophagy (PubMed:33087875).</text>
</comment>
<name>SPT33_MOUSE</name>
<keyword id="KW-0072">Autophagy</keyword>
<keyword id="KW-0963">Cytoplasm</keyword>
<keyword id="KW-0496">Mitochondrion</keyword>
<keyword id="KW-0539">Nucleus</keyword>
<keyword id="KW-0597">Phosphoprotein</keyword>
<keyword id="KW-1185">Reference proteome</keyword>
<sequence length="132" mass="15038">MGQSKSKPREKKEEEKSTTTLVTKSKEKVMEKEAKQSDKESQPAESLLFATSKHSRPSSSSEDKPETKQRSSKKRSVIPQIIITRASNETLISYGIPDNDEQRTIREHADWGPYHRHRSPSTIAAYDVHNTE</sequence>
<protein>
    <recommendedName>
        <fullName>Spermatogenesis-associated protein 33</fullName>
    </recommendedName>
</protein>
<dbReference type="EMBL" id="AK076656">
    <property type="protein sequence ID" value="BAC36438.1"/>
    <property type="molecule type" value="mRNA"/>
</dbReference>
<dbReference type="EMBL" id="GL456146">
    <property type="status" value="NOT_ANNOTATED_CDS"/>
    <property type="molecule type" value="Genomic_DNA"/>
</dbReference>
<dbReference type="CCDS" id="CCDS40510.1"/>
<dbReference type="RefSeq" id="NP_796253.2">
    <property type="nucleotide sequence ID" value="NM_177279.4"/>
</dbReference>
<dbReference type="FunCoup" id="Q8C624">
    <property type="interactions" value="148"/>
</dbReference>
<dbReference type="STRING" id="10090.ENSMUSP00000058002"/>
<dbReference type="iPTMnet" id="Q8C624"/>
<dbReference type="PhosphoSitePlus" id="Q8C624"/>
<dbReference type="PaxDb" id="10090-ENSMUSP00000058002"/>
<dbReference type="ProteomicsDB" id="263335"/>
<dbReference type="DNASU" id="320869"/>
<dbReference type="Ensembl" id="ENSMUST00000060133.8">
    <property type="protein sequence ID" value="ENSMUSP00000058002.7"/>
    <property type="gene ID" value="ENSMUSG00000048478.8"/>
</dbReference>
<dbReference type="GeneID" id="320869"/>
<dbReference type="KEGG" id="mmu:320869"/>
<dbReference type="UCSC" id="uc009nul.1">
    <property type="organism name" value="mouse"/>
</dbReference>
<dbReference type="AGR" id="MGI:2444920"/>
<dbReference type="CTD" id="124045"/>
<dbReference type="MGI" id="MGI:2444920">
    <property type="gene designation" value="Spata33"/>
</dbReference>
<dbReference type="VEuPathDB" id="HostDB:ENSMUSG00000048478"/>
<dbReference type="eggNOG" id="ENOG502TF19">
    <property type="taxonomic scope" value="Eukaryota"/>
</dbReference>
<dbReference type="HOGENOM" id="CLU_162385_0_0_1"/>
<dbReference type="InParanoid" id="Q8C624"/>
<dbReference type="OMA" id="GPFYRHR"/>
<dbReference type="OrthoDB" id="10386166at2759"/>
<dbReference type="PhylomeDB" id="Q8C624"/>
<dbReference type="TreeFam" id="TF337053"/>
<dbReference type="BioGRID-ORCS" id="320869">
    <property type="hits" value="3 hits in 78 CRISPR screens"/>
</dbReference>
<dbReference type="ChiTaRS" id="Spata33">
    <property type="organism name" value="mouse"/>
</dbReference>
<dbReference type="PRO" id="PR:Q8C624"/>
<dbReference type="Proteomes" id="UP000000589">
    <property type="component" value="Chromosome 8"/>
</dbReference>
<dbReference type="RNAct" id="Q8C624">
    <property type="molecule type" value="protein"/>
</dbReference>
<dbReference type="Bgee" id="ENSMUSG00000048478">
    <property type="expression patterns" value="Expressed in seminiferous tubule of testis and 93 other cell types or tissues"/>
</dbReference>
<dbReference type="ExpressionAtlas" id="Q8C624">
    <property type="expression patterns" value="baseline and differential"/>
</dbReference>
<dbReference type="GO" id="GO:0005737">
    <property type="term" value="C:cytoplasm"/>
    <property type="evidence" value="ECO:0000314"/>
    <property type="project" value="UniProtKB"/>
</dbReference>
<dbReference type="GO" id="GO:0005829">
    <property type="term" value="C:cytosol"/>
    <property type="evidence" value="ECO:0007669"/>
    <property type="project" value="UniProtKB-SubCell"/>
</dbReference>
<dbReference type="GO" id="GO:0001673">
    <property type="term" value="C:male germ cell nucleus"/>
    <property type="evidence" value="ECO:0000314"/>
    <property type="project" value="MGI"/>
</dbReference>
<dbReference type="GO" id="GO:0005739">
    <property type="term" value="C:mitochondrion"/>
    <property type="evidence" value="ECO:0000314"/>
    <property type="project" value="UniProtKB"/>
</dbReference>
<dbReference type="GO" id="GO:0097225">
    <property type="term" value="C:sperm midpiece"/>
    <property type="evidence" value="ECO:0000314"/>
    <property type="project" value="UniProtKB"/>
</dbReference>
<dbReference type="GO" id="GO:0097226">
    <property type="term" value="C:sperm mitochondrial sheath"/>
    <property type="evidence" value="ECO:0000314"/>
    <property type="project" value="UniProtKB"/>
</dbReference>
<dbReference type="GO" id="GO:0044877">
    <property type="term" value="F:protein-containing complex binding"/>
    <property type="evidence" value="ECO:0000314"/>
    <property type="project" value="MGI"/>
</dbReference>
<dbReference type="GO" id="GO:0009566">
    <property type="term" value="P:fertilization"/>
    <property type="evidence" value="ECO:0000315"/>
    <property type="project" value="MGI"/>
</dbReference>
<dbReference type="GO" id="GO:0030317">
    <property type="term" value="P:flagellated sperm motility"/>
    <property type="evidence" value="ECO:0000315"/>
    <property type="project" value="MGI"/>
</dbReference>
<dbReference type="GO" id="GO:0000423">
    <property type="term" value="P:mitophagy"/>
    <property type="evidence" value="ECO:0000315"/>
    <property type="project" value="UniProtKB"/>
</dbReference>
<dbReference type="GO" id="GO:0008104">
    <property type="term" value="P:protein localization"/>
    <property type="evidence" value="ECO:0000315"/>
    <property type="project" value="MGI"/>
</dbReference>
<dbReference type="InterPro" id="IPR027930">
    <property type="entry name" value="DUF4609"/>
</dbReference>
<dbReference type="PANTHER" id="PTHR38649">
    <property type="entry name" value="SPERMATOGENESIS-ASSOCIATED PROTEIN 33"/>
    <property type="match status" value="1"/>
</dbReference>
<dbReference type="PANTHER" id="PTHR38649:SF1">
    <property type="entry name" value="SPERMATOGENESIS-ASSOCIATED PROTEIN 33"/>
    <property type="match status" value="1"/>
</dbReference>
<dbReference type="Pfam" id="PF15382">
    <property type="entry name" value="DUF4609"/>
    <property type="match status" value="1"/>
</dbReference>
<organism>
    <name type="scientific">Mus musculus</name>
    <name type="common">Mouse</name>
    <dbReference type="NCBI Taxonomy" id="10090"/>
    <lineage>
        <taxon>Eukaryota</taxon>
        <taxon>Metazoa</taxon>
        <taxon>Chordata</taxon>
        <taxon>Craniata</taxon>
        <taxon>Vertebrata</taxon>
        <taxon>Euteleostomi</taxon>
        <taxon>Mammalia</taxon>
        <taxon>Eutheria</taxon>
        <taxon>Euarchontoglires</taxon>
        <taxon>Glires</taxon>
        <taxon>Rodentia</taxon>
        <taxon>Myomorpha</taxon>
        <taxon>Muroidea</taxon>
        <taxon>Muridae</taxon>
        <taxon>Murinae</taxon>
        <taxon>Mus</taxon>
        <taxon>Mus</taxon>
    </lineage>
</organism>